<accession>B7NP75</accession>
<name>DLGD_ECO7I</name>
<organism>
    <name type="scientific">Escherichia coli O7:K1 (strain IAI39 / ExPEC)</name>
    <dbReference type="NCBI Taxonomy" id="585057"/>
    <lineage>
        <taxon>Bacteria</taxon>
        <taxon>Pseudomonadati</taxon>
        <taxon>Pseudomonadota</taxon>
        <taxon>Gammaproteobacteria</taxon>
        <taxon>Enterobacterales</taxon>
        <taxon>Enterobacteriaceae</taxon>
        <taxon>Escherichia</taxon>
    </lineage>
</organism>
<keyword id="KW-0963">Cytoplasm</keyword>
<keyword id="KW-0520">NAD</keyword>
<keyword id="KW-0560">Oxidoreductase</keyword>
<feature type="chain" id="PRO_1000134338" description="2,3-diketo-L-gulonate reductase">
    <location>
        <begin position="1"/>
        <end position="332"/>
    </location>
</feature>
<feature type="active site" description="Proton donor" evidence="1">
    <location>
        <position position="44"/>
    </location>
</feature>
<feature type="binding site" evidence="1">
    <location>
        <begin position="168"/>
        <end position="174"/>
    </location>
    <ligand>
        <name>NAD(+)</name>
        <dbReference type="ChEBI" id="CHEBI:57540"/>
    </ligand>
</feature>
<feature type="binding site" evidence="1">
    <location>
        <begin position="224"/>
        <end position="225"/>
    </location>
    <ligand>
        <name>NAD(+)</name>
        <dbReference type="ChEBI" id="CHEBI:57540"/>
    </ligand>
</feature>
<feature type="binding site" evidence="1">
    <location>
        <begin position="304"/>
        <end position="306"/>
    </location>
    <ligand>
        <name>NAD(+)</name>
        <dbReference type="ChEBI" id="CHEBI:57540"/>
    </ligand>
</feature>
<protein>
    <recommendedName>
        <fullName evidence="1">2,3-diketo-L-gulonate reductase</fullName>
        <shortName evidence="1">2,3-DKG reductase</shortName>
        <ecNumber evidence="1">1.1.1.130</ecNumber>
    </recommendedName>
    <alternativeName>
        <fullName evidence="1">3-dehydro-L-gulonate 2-dehydrogenase</fullName>
    </alternativeName>
</protein>
<sequence>MKVTFEQLKAAFNRVLISRGVDSETADACAEMFARTTESGVYSHGVNRFPRFIQQLENGDIIPDAQPKRITSLGAIEQWDAQRSIGNLTAKKMMDRAIELAADHGIGLVALRNANHWMRGGSYGWQAAEKGYIGICWTNSIAVMPPWGAKECRIGTNPLIVAIPSTPITMVDMSMSMFSYGMLEVNRLAGRQLPVDGGFDDEGNLTKEPGVIEKNRRILPMGYWKGSGMSIVLDMIATLLSDGASVAEVTQDNSDEYGVSQIFIAIEVDKLIDGPTRDAKLQRIMDYVTTAERADENQAIRLPGHEFTTLLAENRRNGITVDDSVWAKIQAL</sequence>
<dbReference type="EC" id="1.1.1.130" evidence="1"/>
<dbReference type="EMBL" id="CU928164">
    <property type="protein sequence ID" value="CAR20195.1"/>
    <property type="molecule type" value="Genomic_DNA"/>
</dbReference>
<dbReference type="RefSeq" id="YP_002409970.1">
    <property type="nucleotide sequence ID" value="NC_011750.1"/>
</dbReference>
<dbReference type="SMR" id="B7NP75"/>
<dbReference type="STRING" id="585057.ECIAI39_4087"/>
<dbReference type="KEGG" id="ect:ECIAI39_4087"/>
<dbReference type="PATRIC" id="fig|585057.6.peg.4239"/>
<dbReference type="HOGENOM" id="CLU_040452_4_0_6"/>
<dbReference type="Proteomes" id="UP000000749">
    <property type="component" value="Chromosome"/>
</dbReference>
<dbReference type="GO" id="GO:0005737">
    <property type="term" value="C:cytoplasm"/>
    <property type="evidence" value="ECO:0007669"/>
    <property type="project" value="UniProtKB-SubCell"/>
</dbReference>
<dbReference type="GO" id="GO:0047559">
    <property type="term" value="F:3-dehydro-L-gulonate 2-dehydrogenase activity"/>
    <property type="evidence" value="ECO:0007669"/>
    <property type="project" value="UniProtKB-UniRule"/>
</dbReference>
<dbReference type="GO" id="GO:0070403">
    <property type="term" value="F:NAD+ binding"/>
    <property type="evidence" value="ECO:0007669"/>
    <property type="project" value="InterPro"/>
</dbReference>
<dbReference type="FunFam" id="1.10.1530.10:FF:000001">
    <property type="entry name" value="2,3-diketo-L-gulonate reductase"/>
    <property type="match status" value="1"/>
</dbReference>
<dbReference type="Gene3D" id="1.10.1530.10">
    <property type="match status" value="1"/>
</dbReference>
<dbReference type="Gene3D" id="3.30.1370.60">
    <property type="entry name" value="Hypothetical oxidoreductase yiak, domain 2"/>
    <property type="match status" value="1"/>
</dbReference>
<dbReference type="Gene3D" id="3.30.60.50">
    <property type="entry name" value="Hypothetical oxidoreductase yiak, domain 3"/>
    <property type="match status" value="1"/>
</dbReference>
<dbReference type="HAMAP" id="MF_00820">
    <property type="entry name" value="Diketo_gul_reduc"/>
    <property type="match status" value="1"/>
</dbReference>
<dbReference type="InterPro" id="IPR023689">
    <property type="entry name" value="Diketo_gul_Rdtase"/>
</dbReference>
<dbReference type="InterPro" id="IPR043144">
    <property type="entry name" value="Mal/L-sulf/L-lact_DH-like_ah"/>
</dbReference>
<dbReference type="InterPro" id="IPR043143">
    <property type="entry name" value="Mal/L-sulf/L-lact_DH-like_NADP"/>
</dbReference>
<dbReference type="InterPro" id="IPR036111">
    <property type="entry name" value="Mal/L-sulfo/L-lacto_DH-like_sf"/>
</dbReference>
<dbReference type="InterPro" id="IPR003767">
    <property type="entry name" value="Malate/L-lactate_DH-like"/>
</dbReference>
<dbReference type="NCBIfam" id="NF009750">
    <property type="entry name" value="PRK13260.1"/>
    <property type="match status" value="1"/>
</dbReference>
<dbReference type="PANTHER" id="PTHR11091:SF3">
    <property type="entry name" value="2,3-DIKETO-L-GULONATE REDUCTASE"/>
    <property type="match status" value="1"/>
</dbReference>
<dbReference type="PANTHER" id="PTHR11091">
    <property type="entry name" value="OXIDOREDUCTASE-RELATED"/>
    <property type="match status" value="1"/>
</dbReference>
<dbReference type="Pfam" id="PF02615">
    <property type="entry name" value="Ldh_2"/>
    <property type="match status" value="1"/>
</dbReference>
<dbReference type="SUPFAM" id="SSF89733">
    <property type="entry name" value="L-sulfolactate dehydrogenase-like"/>
    <property type="match status" value="1"/>
</dbReference>
<reference key="1">
    <citation type="journal article" date="2009" name="PLoS Genet.">
        <title>Organised genome dynamics in the Escherichia coli species results in highly diverse adaptive paths.</title>
        <authorList>
            <person name="Touchon M."/>
            <person name="Hoede C."/>
            <person name="Tenaillon O."/>
            <person name="Barbe V."/>
            <person name="Baeriswyl S."/>
            <person name="Bidet P."/>
            <person name="Bingen E."/>
            <person name="Bonacorsi S."/>
            <person name="Bouchier C."/>
            <person name="Bouvet O."/>
            <person name="Calteau A."/>
            <person name="Chiapello H."/>
            <person name="Clermont O."/>
            <person name="Cruveiller S."/>
            <person name="Danchin A."/>
            <person name="Diard M."/>
            <person name="Dossat C."/>
            <person name="Karoui M.E."/>
            <person name="Frapy E."/>
            <person name="Garry L."/>
            <person name="Ghigo J.M."/>
            <person name="Gilles A.M."/>
            <person name="Johnson J."/>
            <person name="Le Bouguenec C."/>
            <person name="Lescat M."/>
            <person name="Mangenot S."/>
            <person name="Martinez-Jehanne V."/>
            <person name="Matic I."/>
            <person name="Nassif X."/>
            <person name="Oztas S."/>
            <person name="Petit M.A."/>
            <person name="Pichon C."/>
            <person name="Rouy Z."/>
            <person name="Ruf C.S."/>
            <person name="Schneider D."/>
            <person name="Tourret J."/>
            <person name="Vacherie B."/>
            <person name="Vallenet D."/>
            <person name="Medigue C."/>
            <person name="Rocha E.P.C."/>
            <person name="Denamur E."/>
        </authorList>
    </citation>
    <scope>NUCLEOTIDE SEQUENCE [LARGE SCALE GENOMIC DNA]</scope>
    <source>
        <strain>IAI39 / ExPEC</strain>
    </source>
</reference>
<proteinExistence type="inferred from homology"/>
<comment type="function">
    <text evidence="1">Catalyzes the reduction of 2,3-diketo-L-gulonate in the presence of NADH, to form 3-keto-L-gulonate.</text>
</comment>
<comment type="catalytic activity">
    <reaction evidence="1">
        <text>3-dehydro-L-gulonate + NAD(+) = 2,3-dioxo-L-gulonate + NADH + H(+)</text>
        <dbReference type="Rhea" id="RHEA:21924"/>
        <dbReference type="ChEBI" id="CHEBI:15378"/>
        <dbReference type="ChEBI" id="CHEBI:57441"/>
        <dbReference type="ChEBI" id="CHEBI:57540"/>
        <dbReference type="ChEBI" id="CHEBI:57655"/>
        <dbReference type="ChEBI" id="CHEBI:57945"/>
        <dbReference type="EC" id="1.1.1.130"/>
    </reaction>
</comment>
<comment type="catalytic activity">
    <reaction evidence="1">
        <text>3-dehydro-L-gulonate + NADP(+) = 2,3-dioxo-L-gulonate + NADPH + H(+)</text>
        <dbReference type="Rhea" id="RHEA:21928"/>
        <dbReference type="ChEBI" id="CHEBI:15378"/>
        <dbReference type="ChEBI" id="CHEBI:57441"/>
        <dbReference type="ChEBI" id="CHEBI:57655"/>
        <dbReference type="ChEBI" id="CHEBI:57783"/>
        <dbReference type="ChEBI" id="CHEBI:58349"/>
        <dbReference type="EC" id="1.1.1.130"/>
    </reaction>
</comment>
<comment type="subunit">
    <text evidence="1">Homodimer.</text>
</comment>
<comment type="subcellular location">
    <subcellularLocation>
        <location evidence="1">Cytoplasm</location>
    </subcellularLocation>
</comment>
<comment type="similarity">
    <text evidence="1">Belongs to the LDH2/MDH2 oxidoreductase family. DlgD subfamily.</text>
</comment>
<evidence type="ECO:0000255" key="1">
    <source>
        <dbReference type="HAMAP-Rule" id="MF_00820"/>
    </source>
</evidence>
<gene>
    <name evidence="1" type="primary">dlgD</name>
    <name type="ordered locus">ECIAI39_4087</name>
</gene>